<gene>
    <name evidence="1" type="primary">lysS</name>
    <name type="ordered locus">Bsph_0101</name>
</gene>
<name>SYK_LYSSC</name>
<accession>B1HSY5</accession>
<evidence type="ECO:0000255" key="1">
    <source>
        <dbReference type="HAMAP-Rule" id="MF_00252"/>
    </source>
</evidence>
<organism>
    <name type="scientific">Lysinibacillus sphaericus (strain C3-41)</name>
    <dbReference type="NCBI Taxonomy" id="444177"/>
    <lineage>
        <taxon>Bacteria</taxon>
        <taxon>Bacillati</taxon>
        <taxon>Bacillota</taxon>
        <taxon>Bacilli</taxon>
        <taxon>Bacillales</taxon>
        <taxon>Bacillaceae</taxon>
        <taxon>Lysinibacillus</taxon>
    </lineage>
</organism>
<comment type="catalytic activity">
    <reaction evidence="1">
        <text>tRNA(Lys) + L-lysine + ATP = L-lysyl-tRNA(Lys) + AMP + diphosphate</text>
        <dbReference type="Rhea" id="RHEA:20792"/>
        <dbReference type="Rhea" id="RHEA-COMP:9696"/>
        <dbReference type="Rhea" id="RHEA-COMP:9697"/>
        <dbReference type="ChEBI" id="CHEBI:30616"/>
        <dbReference type="ChEBI" id="CHEBI:32551"/>
        <dbReference type="ChEBI" id="CHEBI:33019"/>
        <dbReference type="ChEBI" id="CHEBI:78442"/>
        <dbReference type="ChEBI" id="CHEBI:78529"/>
        <dbReference type="ChEBI" id="CHEBI:456215"/>
        <dbReference type="EC" id="6.1.1.6"/>
    </reaction>
</comment>
<comment type="cofactor">
    <cofactor evidence="1">
        <name>Mg(2+)</name>
        <dbReference type="ChEBI" id="CHEBI:18420"/>
    </cofactor>
    <text evidence="1">Binds 3 Mg(2+) ions per subunit.</text>
</comment>
<comment type="subunit">
    <text evidence="1">Homodimer.</text>
</comment>
<comment type="subcellular location">
    <subcellularLocation>
        <location evidence="1">Cytoplasm</location>
    </subcellularLocation>
</comment>
<comment type="similarity">
    <text evidence="1">Belongs to the class-II aminoacyl-tRNA synthetase family.</text>
</comment>
<proteinExistence type="inferred from homology"/>
<feature type="chain" id="PRO_1000204568" description="Lysine--tRNA ligase">
    <location>
        <begin position="1"/>
        <end position="500"/>
    </location>
</feature>
<feature type="binding site" evidence="1">
    <location>
        <position position="409"/>
    </location>
    <ligand>
        <name>Mg(2+)</name>
        <dbReference type="ChEBI" id="CHEBI:18420"/>
        <label>1</label>
    </ligand>
</feature>
<feature type="binding site" evidence="1">
    <location>
        <position position="416"/>
    </location>
    <ligand>
        <name>Mg(2+)</name>
        <dbReference type="ChEBI" id="CHEBI:18420"/>
        <label>1</label>
    </ligand>
</feature>
<feature type="binding site" evidence="1">
    <location>
        <position position="416"/>
    </location>
    <ligand>
        <name>Mg(2+)</name>
        <dbReference type="ChEBI" id="CHEBI:18420"/>
        <label>2</label>
    </ligand>
</feature>
<dbReference type="EC" id="6.1.1.6" evidence="1"/>
<dbReference type="EMBL" id="CP000817">
    <property type="protein sequence ID" value="ACA37739.1"/>
    <property type="molecule type" value="Genomic_DNA"/>
</dbReference>
<dbReference type="SMR" id="B1HSY5"/>
<dbReference type="EnsemblBacteria" id="ACA37739">
    <property type="protein sequence ID" value="ACA37739"/>
    <property type="gene ID" value="Bsph_0101"/>
</dbReference>
<dbReference type="KEGG" id="lsp:Bsph_0101"/>
<dbReference type="HOGENOM" id="CLU_008255_6_0_9"/>
<dbReference type="Proteomes" id="UP000002164">
    <property type="component" value="Chromosome"/>
</dbReference>
<dbReference type="GO" id="GO:0005829">
    <property type="term" value="C:cytosol"/>
    <property type="evidence" value="ECO:0007669"/>
    <property type="project" value="TreeGrafter"/>
</dbReference>
<dbReference type="GO" id="GO:0005524">
    <property type="term" value="F:ATP binding"/>
    <property type="evidence" value="ECO:0007669"/>
    <property type="project" value="UniProtKB-UniRule"/>
</dbReference>
<dbReference type="GO" id="GO:0140096">
    <property type="term" value="F:catalytic activity, acting on a protein"/>
    <property type="evidence" value="ECO:0007669"/>
    <property type="project" value="UniProtKB-ARBA"/>
</dbReference>
<dbReference type="GO" id="GO:0004824">
    <property type="term" value="F:lysine-tRNA ligase activity"/>
    <property type="evidence" value="ECO:0007669"/>
    <property type="project" value="UniProtKB-UniRule"/>
</dbReference>
<dbReference type="GO" id="GO:0000287">
    <property type="term" value="F:magnesium ion binding"/>
    <property type="evidence" value="ECO:0007669"/>
    <property type="project" value="UniProtKB-UniRule"/>
</dbReference>
<dbReference type="GO" id="GO:0016740">
    <property type="term" value="F:transferase activity"/>
    <property type="evidence" value="ECO:0007669"/>
    <property type="project" value="UniProtKB-ARBA"/>
</dbReference>
<dbReference type="GO" id="GO:0000049">
    <property type="term" value="F:tRNA binding"/>
    <property type="evidence" value="ECO:0007669"/>
    <property type="project" value="TreeGrafter"/>
</dbReference>
<dbReference type="GO" id="GO:0006430">
    <property type="term" value="P:lysyl-tRNA aminoacylation"/>
    <property type="evidence" value="ECO:0007669"/>
    <property type="project" value="UniProtKB-UniRule"/>
</dbReference>
<dbReference type="CDD" id="cd00775">
    <property type="entry name" value="LysRS_core"/>
    <property type="match status" value="1"/>
</dbReference>
<dbReference type="CDD" id="cd04322">
    <property type="entry name" value="LysRS_N"/>
    <property type="match status" value="1"/>
</dbReference>
<dbReference type="FunFam" id="2.40.50.140:FF:000024">
    <property type="entry name" value="Lysine--tRNA ligase"/>
    <property type="match status" value="1"/>
</dbReference>
<dbReference type="FunFam" id="3.30.930.10:FF:000001">
    <property type="entry name" value="Lysine--tRNA ligase"/>
    <property type="match status" value="1"/>
</dbReference>
<dbReference type="Gene3D" id="3.30.930.10">
    <property type="entry name" value="Bira Bifunctional Protein, Domain 2"/>
    <property type="match status" value="1"/>
</dbReference>
<dbReference type="Gene3D" id="2.40.50.140">
    <property type="entry name" value="Nucleic acid-binding proteins"/>
    <property type="match status" value="1"/>
</dbReference>
<dbReference type="HAMAP" id="MF_00252">
    <property type="entry name" value="Lys_tRNA_synth_class2"/>
    <property type="match status" value="1"/>
</dbReference>
<dbReference type="InterPro" id="IPR004364">
    <property type="entry name" value="Aa-tRNA-synt_II"/>
</dbReference>
<dbReference type="InterPro" id="IPR006195">
    <property type="entry name" value="aa-tRNA-synth_II"/>
</dbReference>
<dbReference type="InterPro" id="IPR045864">
    <property type="entry name" value="aa-tRNA-synth_II/BPL/LPL"/>
</dbReference>
<dbReference type="InterPro" id="IPR002313">
    <property type="entry name" value="Lys-tRNA-ligase_II"/>
</dbReference>
<dbReference type="InterPro" id="IPR034762">
    <property type="entry name" value="Lys-tRNA-ligase_II_bac/euk"/>
</dbReference>
<dbReference type="InterPro" id="IPR044136">
    <property type="entry name" value="Lys-tRNA-ligase_II_N"/>
</dbReference>
<dbReference type="InterPro" id="IPR018149">
    <property type="entry name" value="Lys-tRNA-synth_II_C"/>
</dbReference>
<dbReference type="InterPro" id="IPR012340">
    <property type="entry name" value="NA-bd_OB-fold"/>
</dbReference>
<dbReference type="InterPro" id="IPR004365">
    <property type="entry name" value="NA-bd_OB_tRNA"/>
</dbReference>
<dbReference type="NCBIfam" id="TIGR00499">
    <property type="entry name" value="lysS_bact"/>
    <property type="match status" value="1"/>
</dbReference>
<dbReference type="NCBIfam" id="NF001756">
    <property type="entry name" value="PRK00484.1"/>
    <property type="match status" value="1"/>
</dbReference>
<dbReference type="PANTHER" id="PTHR42918:SF15">
    <property type="entry name" value="LYSINE--TRNA LIGASE, CHLOROPLASTIC_MITOCHONDRIAL"/>
    <property type="match status" value="1"/>
</dbReference>
<dbReference type="PANTHER" id="PTHR42918">
    <property type="entry name" value="LYSYL-TRNA SYNTHETASE"/>
    <property type="match status" value="1"/>
</dbReference>
<dbReference type="Pfam" id="PF00152">
    <property type="entry name" value="tRNA-synt_2"/>
    <property type="match status" value="1"/>
</dbReference>
<dbReference type="Pfam" id="PF01336">
    <property type="entry name" value="tRNA_anti-codon"/>
    <property type="match status" value="1"/>
</dbReference>
<dbReference type="PIRSF" id="PIRSF039101">
    <property type="entry name" value="LysRS2"/>
    <property type="match status" value="1"/>
</dbReference>
<dbReference type="PRINTS" id="PR00982">
    <property type="entry name" value="TRNASYNTHLYS"/>
</dbReference>
<dbReference type="SUPFAM" id="SSF55681">
    <property type="entry name" value="Class II aaRS and biotin synthetases"/>
    <property type="match status" value="1"/>
</dbReference>
<dbReference type="SUPFAM" id="SSF50249">
    <property type="entry name" value="Nucleic acid-binding proteins"/>
    <property type="match status" value="1"/>
</dbReference>
<dbReference type="PROSITE" id="PS50862">
    <property type="entry name" value="AA_TRNA_LIGASE_II"/>
    <property type="match status" value="1"/>
</dbReference>
<sequence>MKQVSNIEELNDQLLVRRQKMTTILENGQDPFGSRFERTHLSTEVKEQFADQTKEQLEENLQEVIIAGRIMTKRGKGKAGFAHIQDLGGQIQIYVRQDHVGEEAYELFKQADLGDIVGIRGNVFRTQVGELSVKAEEFTFLTKALRPMPEKFHGLQDVEQRYRQRYLDLMTNEDSKLTFIARSKIIRAIRNYLDNAGYLEVETPMLHTIAGGAAARPFITHHNALDMELYMRIAIELHLKRLIVGGLEKVYEIGRVFRNEGISTRHNPEFTMIELYEAYADYQDIMSLTENLIAHVAQEVLGTTTVQYGEDEINLAVGWKRVHMVDAVKEATGVDFWQPMTKEQAQALAKEHGVEVKDVHEVGHIINEFFEQKIEETLVQPTFVYGHPVEISPLAKKNPEDERFTDRFELFIVRREHANAFTELNDPIDQRQRFEAQLAEKAAGNDEAHEMDNDFIEALEYGMPPTGGLGIGIDRLIMLLTNSPSIRDVLLFPTMRHITK</sequence>
<protein>
    <recommendedName>
        <fullName evidence="1">Lysine--tRNA ligase</fullName>
        <ecNumber evidence="1">6.1.1.6</ecNumber>
    </recommendedName>
    <alternativeName>
        <fullName evidence="1">Lysyl-tRNA synthetase</fullName>
        <shortName evidence="1">LysRS</shortName>
    </alternativeName>
</protein>
<keyword id="KW-0030">Aminoacyl-tRNA synthetase</keyword>
<keyword id="KW-0067">ATP-binding</keyword>
<keyword id="KW-0963">Cytoplasm</keyword>
<keyword id="KW-0436">Ligase</keyword>
<keyword id="KW-0460">Magnesium</keyword>
<keyword id="KW-0479">Metal-binding</keyword>
<keyword id="KW-0547">Nucleotide-binding</keyword>
<keyword id="KW-0648">Protein biosynthesis</keyword>
<reference key="1">
    <citation type="journal article" date="2008" name="J. Bacteriol.">
        <title>Complete genome sequence of the mosquitocidal bacterium Bacillus sphaericus C3-41 and comparison with those of closely related Bacillus species.</title>
        <authorList>
            <person name="Hu X."/>
            <person name="Fan W."/>
            <person name="Han B."/>
            <person name="Liu H."/>
            <person name="Zheng D."/>
            <person name="Li Q."/>
            <person name="Dong W."/>
            <person name="Yan J."/>
            <person name="Gao M."/>
            <person name="Berry C."/>
            <person name="Yuan Z."/>
        </authorList>
    </citation>
    <scope>NUCLEOTIDE SEQUENCE [LARGE SCALE GENOMIC DNA]</scope>
    <source>
        <strain>C3-41</strain>
    </source>
</reference>